<evidence type="ECO:0000255" key="1">
    <source>
        <dbReference type="PROSITE-ProRule" id="PRU00981"/>
    </source>
</evidence>
<evidence type="ECO:0000256" key="2">
    <source>
        <dbReference type="SAM" id="MobiDB-lite"/>
    </source>
</evidence>
<evidence type="ECO:0000269" key="3">
    <source>
    </source>
</evidence>
<evidence type="ECO:0000269" key="4">
    <source>
    </source>
</evidence>
<evidence type="ECO:0000269" key="5">
    <source>
    </source>
</evidence>
<evidence type="ECO:0000269" key="6">
    <source>
    </source>
</evidence>
<evidence type="ECO:0000269" key="7">
    <source>
    </source>
</evidence>
<evidence type="ECO:0000269" key="8">
    <source>
    </source>
</evidence>
<evidence type="ECO:0000269" key="9">
    <source>
    </source>
</evidence>
<evidence type="ECO:0000269" key="10">
    <source>
    </source>
</evidence>
<evidence type="ECO:0000269" key="11">
    <source>
    </source>
</evidence>
<evidence type="ECO:0000269" key="12">
    <source>
    </source>
</evidence>
<evidence type="ECO:0000269" key="13">
    <source>
    </source>
</evidence>
<evidence type="ECO:0000303" key="14">
    <source>
    </source>
</evidence>
<evidence type="ECO:0000303" key="15">
    <source>
    </source>
</evidence>
<evidence type="ECO:0000305" key="16"/>
<evidence type="ECO:0007744" key="17">
    <source>
        <dbReference type="PDB" id="7F2F"/>
    </source>
</evidence>
<evidence type="ECO:0007744" key="18">
    <source>
    </source>
</evidence>
<evidence type="ECO:0007744" key="19">
    <source>
    </source>
</evidence>
<evidence type="ECO:0007829" key="20">
    <source>
        <dbReference type="PDB" id="7F2F"/>
    </source>
</evidence>
<dbReference type="EMBL" id="Z14973">
    <property type="protein sequence ID" value="CAA78695.1"/>
    <property type="molecule type" value="Genomic_DNA"/>
</dbReference>
<dbReference type="EMBL" id="L38594">
    <property type="protein sequence ID" value="AAA92865.1"/>
    <property type="molecule type" value="Genomic_DNA"/>
</dbReference>
<dbReference type="EMBL" id="X95720">
    <property type="protein sequence ID" value="CAA65032.1"/>
    <property type="molecule type" value="Genomic_DNA"/>
</dbReference>
<dbReference type="EMBL" id="Z75252">
    <property type="protein sequence ID" value="CAA99671.1"/>
    <property type="molecule type" value="Genomic_DNA"/>
</dbReference>
<dbReference type="EMBL" id="BK006948">
    <property type="protein sequence ID" value="DAA11106.1"/>
    <property type="molecule type" value="Genomic_DNA"/>
</dbReference>
<dbReference type="PIR" id="S48252">
    <property type="entry name" value="S48252"/>
</dbReference>
<dbReference type="RefSeq" id="NP_014989.3">
    <property type="nucleotide sequence ID" value="NM_001183764.3"/>
</dbReference>
<dbReference type="PDB" id="7F2F">
    <property type="method" value="X-ray"/>
    <property type="resolution" value="2.55 A"/>
    <property type="chains" value="A/B=165-291"/>
</dbReference>
<dbReference type="PDBsum" id="7F2F"/>
<dbReference type="SMR" id="P33122"/>
<dbReference type="BioGRID" id="34729">
    <property type="interactions" value="217"/>
</dbReference>
<dbReference type="DIP" id="DIP-4279N"/>
<dbReference type="FunCoup" id="P33122">
    <property type="interactions" value="1552"/>
</dbReference>
<dbReference type="IntAct" id="P33122">
    <property type="interactions" value="2"/>
</dbReference>
<dbReference type="STRING" id="4932.YOR344C"/>
<dbReference type="iPTMnet" id="P33122"/>
<dbReference type="PaxDb" id="4932-YOR344C"/>
<dbReference type="PeptideAtlas" id="P33122"/>
<dbReference type="EnsemblFungi" id="YOR344C_mRNA">
    <property type="protein sequence ID" value="YOR344C"/>
    <property type="gene ID" value="YOR344C"/>
</dbReference>
<dbReference type="GeneID" id="854525"/>
<dbReference type="KEGG" id="sce:YOR344C"/>
<dbReference type="AGR" id="SGD:S000005871"/>
<dbReference type="SGD" id="S000005871">
    <property type="gene designation" value="TYE7"/>
</dbReference>
<dbReference type="VEuPathDB" id="FungiDB:YOR344C"/>
<dbReference type="eggNOG" id="KOG2588">
    <property type="taxonomic scope" value="Eukaryota"/>
</dbReference>
<dbReference type="HOGENOM" id="CLU_067895_0_0_1"/>
<dbReference type="InParanoid" id="P33122"/>
<dbReference type="OMA" id="IXSASSS"/>
<dbReference type="OrthoDB" id="2133190at2759"/>
<dbReference type="BioCyc" id="YEAST:G3O-33818-MONOMER"/>
<dbReference type="BioGRID-ORCS" id="854525">
    <property type="hits" value="0 hits in 13 CRISPR screens"/>
</dbReference>
<dbReference type="PRO" id="PR:P33122"/>
<dbReference type="Proteomes" id="UP000002311">
    <property type="component" value="Chromosome XV"/>
</dbReference>
<dbReference type="RNAct" id="P33122">
    <property type="molecule type" value="protein"/>
</dbReference>
<dbReference type="GO" id="GO:0000785">
    <property type="term" value="C:chromatin"/>
    <property type="evidence" value="ECO:0000314"/>
    <property type="project" value="SGD"/>
</dbReference>
<dbReference type="GO" id="GO:0005634">
    <property type="term" value="C:nucleus"/>
    <property type="evidence" value="ECO:0000318"/>
    <property type="project" value="GO_Central"/>
</dbReference>
<dbReference type="GO" id="GO:0001216">
    <property type="term" value="F:DNA-binding transcription activator activity"/>
    <property type="evidence" value="ECO:0000318"/>
    <property type="project" value="GO_Central"/>
</dbReference>
<dbReference type="GO" id="GO:0003700">
    <property type="term" value="F:DNA-binding transcription factor activity"/>
    <property type="evidence" value="ECO:0000314"/>
    <property type="project" value="SGD"/>
</dbReference>
<dbReference type="GO" id="GO:0046983">
    <property type="term" value="F:protein dimerization activity"/>
    <property type="evidence" value="ECO:0007669"/>
    <property type="project" value="InterPro"/>
</dbReference>
<dbReference type="GO" id="GO:0000978">
    <property type="term" value="F:RNA polymerase II cis-regulatory region sequence-specific DNA binding"/>
    <property type="evidence" value="ECO:0000318"/>
    <property type="project" value="GO_Central"/>
</dbReference>
<dbReference type="GO" id="GO:0043565">
    <property type="term" value="F:sequence-specific DNA binding"/>
    <property type="evidence" value="ECO:0007005"/>
    <property type="project" value="SGD"/>
</dbReference>
<dbReference type="GO" id="GO:0045821">
    <property type="term" value="P:positive regulation of glycolytic process"/>
    <property type="evidence" value="ECO:0000315"/>
    <property type="project" value="SGD"/>
</dbReference>
<dbReference type="GO" id="GO:0045944">
    <property type="term" value="P:positive regulation of transcription by RNA polymerase II"/>
    <property type="evidence" value="ECO:0000318"/>
    <property type="project" value="GO_Central"/>
</dbReference>
<dbReference type="GO" id="GO:0006368">
    <property type="term" value="P:transcription elongation by RNA polymerase II"/>
    <property type="evidence" value="ECO:0000314"/>
    <property type="project" value="SGD"/>
</dbReference>
<dbReference type="CDD" id="cd11395">
    <property type="entry name" value="bHLHzip_SREBP_like"/>
    <property type="match status" value="1"/>
</dbReference>
<dbReference type="Gene3D" id="4.10.280.10">
    <property type="entry name" value="Helix-loop-helix DNA-binding domain"/>
    <property type="match status" value="1"/>
</dbReference>
<dbReference type="InterPro" id="IPR011598">
    <property type="entry name" value="bHLH_dom"/>
</dbReference>
<dbReference type="InterPro" id="IPR036638">
    <property type="entry name" value="HLH_DNA-bd_sf"/>
</dbReference>
<dbReference type="InterPro" id="IPR052099">
    <property type="entry name" value="Regulatory_TF_Diverse"/>
</dbReference>
<dbReference type="PANTHER" id="PTHR47336:SF3">
    <property type="entry name" value="SERINE-RICH PROTEIN TYE7"/>
    <property type="match status" value="1"/>
</dbReference>
<dbReference type="PANTHER" id="PTHR47336">
    <property type="entry name" value="TRANSCRIPTION FACTOR HMS1-RELATED"/>
    <property type="match status" value="1"/>
</dbReference>
<dbReference type="Pfam" id="PF00010">
    <property type="entry name" value="HLH"/>
    <property type="match status" value="1"/>
</dbReference>
<dbReference type="SMART" id="SM00353">
    <property type="entry name" value="HLH"/>
    <property type="match status" value="1"/>
</dbReference>
<dbReference type="SUPFAM" id="SSF47459">
    <property type="entry name" value="HLH, helix-loop-helix DNA-binding domain"/>
    <property type="match status" value="1"/>
</dbReference>
<dbReference type="PROSITE" id="PS50888">
    <property type="entry name" value="BHLH"/>
    <property type="match status" value="1"/>
</dbReference>
<keyword id="KW-0002">3D-structure</keyword>
<keyword id="KW-0010">Activator</keyword>
<keyword id="KW-0238">DNA-binding</keyword>
<keyword id="KW-0539">Nucleus</keyword>
<keyword id="KW-0597">Phosphoprotein</keyword>
<keyword id="KW-1185">Reference proteome</keyword>
<keyword id="KW-0804">Transcription</keyword>
<keyword id="KW-0805">Transcription regulation</keyword>
<sequence length="291" mass="32689">MNSILDRNVRSSETTLIKPESEFDNWLSDENDGASHINVNKDSSSVLSASSSTWFEPLENIISSASSSSIGSPIEDQFISSNNEESALFPTDQFFSNPSSYSHSPEVSSSIKREEDDNALSLADFEPASLQLMPNMINTDNNDDSTPLKNEIELNDSFIKTNLDAKETKKRAPRKRLTPFQKQAHNKIEKRYRININTKIARLQQIIPWVASEQTAFEVGDSVKKQDEDGAETAATTPLPSAAATSTKLNKSMILEKAVDYILYLQNNERLYEMEVQRLKSEIDTLKQDQK</sequence>
<accession>P33122</accession>
<accession>D6W340</accession>
<name>TYE7_YEAST</name>
<organism>
    <name type="scientific">Saccharomyces cerevisiae (strain ATCC 204508 / S288c)</name>
    <name type="common">Baker's yeast</name>
    <dbReference type="NCBI Taxonomy" id="559292"/>
    <lineage>
        <taxon>Eukaryota</taxon>
        <taxon>Fungi</taxon>
        <taxon>Dikarya</taxon>
        <taxon>Ascomycota</taxon>
        <taxon>Saccharomycotina</taxon>
        <taxon>Saccharomycetes</taxon>
        <taxon>Saccharomycetales</taxon>
        <taxon>Saccharomycetaceae</taxon>
        <taxon>Saccharomyces</taxon>
    </lineage>
</organism>
<reference key="1">
    <citation type="journal article" date="1994" name="Yeast">
        <title>The TYE7 gene of Saccharomyces cerevisiae encodes a putative bHLH-LZ transcription factor required for Ty1-mediated gene expression.</title>
        <authorList>
            <person name="Loehning C."/>
            <person name="Ciriacy M."/>
        </authorList>
    </citation>
    <scope>NUCLEOTIDE SEQUENCE [GENOMIC DNA]</scope>
    <scope>FUNCTION</scope>
</reference>
<reference key="2">
    <citation type="thesis" date="1993" institute="Heinrich-Heine University / Duesseldorf" country="Germany">
        <authorList>
            <person name="Loehning C."/>
        </authorList>
    </citation>
    <scope>NUCLEOTIDE SEQUENCE [GENOMIC DNA]</scope>
</reference>
<reference key="3">
    <citation type="journal article" date="1995" name="Mol. Cell. Biol.">
        <title>The GCR1 requirement for yeast glycolytic gene expression is suppressed by dominant mutations in the SGC1 gene, which encodes a novel basic-helix-loop-helix protein.</title>
        <authorList>
            <person name="Nishi K."/>
            <person name="Park C.S."/>
            <person name="Pepper A.E."/>
            <person name="Eichinger G."/>
            <person name="Innis M.A."/>
            <person name="Holland M.J."/>
        </authorList>
    </citation>
    <scope>NUCLEOTIDE SEQUENCE [GENOMIC DNA]</scope>
    <scope>FUNCTION</scope>
    <scope>MUTAGENESIS OF GLU-189 AND VAL-210</scope>
</reference>
<reference key="4">
    <citation type="journal article" date="1996" name="Yeast">
        <title>Nucleotide sequence analysis of a 40 kb segment on the right arm of yeast chromosome XV reveals 18 open reading frames including a new pyruvate kinase and three homologues to chromosome I genes.</title>
        <authorList>
            <person name="Purnelle B."/>
            <person name="Goffeau A."/>
        </authorList>
    </citation>
    <scope>NUCLEOTIDE SEQUENCE [GENOMIC DNA]</scope>
    <source>
        <strain>ATCC 90843 / S288c / FY73</strain>
    </source>
</reference>
<reference key="5">
    <citation type="journal article" date="1997" name="Nature">
        <title>The nucleotide sequence of Saccharomyces cerevisiae chromosome XV.</title>
        <authorList>
            <person name="Dujon B."/>
            <person name="Albermann K."/>
            <person name="Aldea M."/>
            <person name="Alexandraki D."/>
            <person name="Ansorge W."/>
            <person name="Arino J."/>
            <person name="Benes V."/>
            <person name="Bohn C."/>
            <person name="Bolotin-Fukuhara M."/>
            <person name="Bordonne R."/>
            <person name="Boyer J."/>
            <person name="Camasses A."/>
            <person name="Casamayor A."/>
            <person name="Casas C."/>
            <person name="Cheret G."/>
            <person name="Cziepluch C."/>
            <person name="Daignan-Fornier B."/>
            <person name="Dang V.-D."/>
            <person name="de Haan M."/>
            <person name="Delius H."/>
            <person name="Durand P."/>
            <person name="Fairhead C."/>
            <person name="Feldmann H."/>
            <person name="Gaillon L."/>
            <person name="Galisson F."/>
            <person name="Gamo F.-J."/>
            <person name="Gancedo C."/>
            <person name="Goffeau A."/>
            <person name="Goulding S.E."/>
            <person name="Grivell L.A."/>
            <person name="Habbig B."/>
            <person name="Hand N.J."/>
            <person name="Hani J."/>
            <person name="Hattenhorst U."/>
            <person name="Hebling U."/>
            <person name="Hernando Y."/>
            <person name="Herrero E."/>
            <person name="Heumann K."/>
            <person name="Hiesel R."/>
            <person name="Hilger F."/>
            <person name="Hofmann B."/>
            <person name="Hollenberg C.P."/>
            <person name="Hughes B."/>
            <person name="Jauniaux J.-C."/>
            <person name="Kalogeropoulos A."/>
            <person name="Katsoulou C."/>
            <person name="Kordes E."/>
            <person name="Lafuente M.J."/>
            <person name="Landt O."/>
            <person name="Louis E.J."/>
            <person name="Maarse A.C."/>
            <person name="Madania A."/>
            <person name="Mannhaupt G."/>
            <person name="Marck C."/>
            <person name="Martin R.P."/>
            <person name="Mewes H.-W."/>
            <person name="Michaux G."/>
            <person name="Paces V."/>
            <person name="Parle-McDermott A.G."/>
            <person name="Pearson B.M."/>
            <person name="Perrin A."/>
            <person name="Pettersson B."/>
            <person name="Poch O."/>
            <person name="Pohl T.M."/>
            <person name="Poirey R."/>
            <person name="Portetelle D."/>
            <person name="Pujol A."/>
            <person name="Purnelle B."/>
            <person name="Ramezani Rad M."/>
            <person name="Rechmann S."/>
            <person name="Schwager C."/>
            <person name="Schweizer M."/>
            <person name="Sor F."/>
            <person name="Sterky F."/>
            <person name="Tarassov I.A."/>
            <person name="Teodoru C."/>
            <person name="Tettelin H."/>
            <person name="Thierry A."/>
            <person name="Tobiasch E."/>
            <person name="Tzermia M."/>
            <person name="Uhlen M."/>
            <person name="Unseld M."/>
            <person name="Valens M."/>
            <person name="Vandenbol M."/>
            <person name="Vetter I."/>
            <person name="Vlcek C."/>
            <person name="Voet M."/>
            <person name="Volckaert G."/>
            <person name="Voss H."/>
            <person name="Wambutt R."/>
            <person name="Wedler H."/>
            <person name="Wiemann S."/>
            <person name="Winsor B."/>
            <person name="Wolfe K.H."/>
            <person name="Zollner A."/>
            <person name="Zumstein E."/>
            <person name="Kleine K."/>
        </authorList>
    </citation>
    <scope>NUCLEOTIDE SEQUENCE [LARGE SCALE GENOMIC DNA]</scope>
    <source>
        <strain>ATCC 204508 / S288c</strain>
    </source>
</reference>
<reference key="6">
    <citation type="journal article" date="2014" name="G3 (Bethesda)">
        <title>The reference genome sequence of Saccharomyces cerevisiae: Then and now.</title>
        <authorList>
            <person name="Engel S.R."/>
            <person name="Dietrich F.S."/>
            <person name="Fisk D.G."/>
            <person name="Binkley G."/>
            <person name="Balakrishnan R."/>
            <person name="Costanzo M.C."/>
            <person name="Dwight S.S."/>
            <person name="Hitz B.C."/>
            <person name="Karra K."/>
            <person name="Nash R.S."/>
            <person name="Weng S."/>
            <person name="Wong E.D."/>
            <person name="Lloyd P."/>
            <person name="Skrzypek M.S."/>
            <person name="Miyasato S.R."/>
            <person name="Simison M."/>
            <person name="Cherry J.M."/>
        </authorList>
    </citation>
    <scope>GENOME REANNOTATION</scope>
    <source>
        <strain>ATCC 204508 / S288c</strain>
    </source>
</reference>
<reference key="7">
    <citation type="journal article" date="1999" name="FEBS Lett.">
        <title>The E-box DNA binding protein Sgc1p suppresses the gcr2 mutation, which is involved in transcriptional activation of glycolytic genes in Saccharomyces cerevisiae.</title>
        <authorList>
            <person name="Sato T."/>
            <person name="Lopez M.C."/>
            <person name="Sugioka S."/>
            <person name="Jigami Y."/>
            <person name="Baker H.V."/>
            <person name="Uemura H."/>
        </authorList>
    </citation>
    <scope>FUNCTION</scope>
    <scope>DNA-BINDING</scope>
    <scope>SUBUNIT</scope>
</reference>
<reference key="8">
    <citation type="journal article" date="2003" name="Nature">
        <title>Global analysis of protein expression in yeast.</title>
        <authorList>
            <person name="Ghaemmaghami S."/>
            <person name="Huh W.-K."/>
            <person name="Bower K."/>
            <person name="Howson R.W."/>
            <person name="Belle A."/>
            <person name="Dephoure N."/>
            <person name="O'Shea E.K."/>
            <person name="Weissman J.S."/>
        </authorList>
    </citation>
    <scope>LEVEL OF PROTEIN EXPRESSION [LARGE SCALE ANALYSIS]</scope>
</reference>
<reference key="9">
    <citation type="journal article" date="2005" name="Proc. Natl. Acad. Sci. U.S.A.">
        <title>Statistical methods for identifying yeast cell cycle transcription factors.</title>
        <authorList>
            <person name="Tsai H.K."/>
            <person name="Lu H.H."/>
            <person name="Li W.H."/>
        </authorList>
    </citation>
    <scope>FUNCTION</scope>
</reference>
<reference key="10">
    <citation type="journal article" date="2006" name="Nucleic Acids Res.">
        <title>The YEASTRACT database: a tool for the analysis of transcription regulatory associations in Saccharomyces cerevisiae.</title>
        <authorList>
            <person name="Teixeira M.C."/>
            <person name="Monteiro P."/>
            <person name="Jain P."/>
            <person name="Tenreiro S."/>
            <person name="Fernandes A.R."/>
            <person name="Mira N.P."/>
            <person name="Alenquer M."/>
            <person name="Freitas A.T."/>
            <person name="Oliveira A.L."/>
            <person name="Sa-Correia I."/>
        </authorList>
    </citation>
    <scope>FUNCTION</scope>
</reference>
<reference key="11">
    <citation type="journal article" date="2007" name="BMC Genomics">
        <title>Exploiting combinatorial cultivation conditions to infer transcriptional regulation.</title>
        <authorList>
            <person name="Knijnenburg T.A."/>
            <person name="de Winde J.H."/>
            <person name="Daran J.M."/>
            <person name="Daran-Lapujade P."/>
            <person name="Pronk J.T."/>
            <person name="Reinders M.J."/>
            <person name="Wessels L.F."/>
        </authorList>
    </citation>
    <scope>FUNCTION</scope>
</reference>
<reference key="12">
    <citation type="journal article" date="2007" name="J. Proteome Res.">
        <title>Large-scale phosphorylation analysis of alpha-factor-arrested Saccharomyces cerevisiae.</title>
        <authorList>
            <person name="Li X."/>
            <person name="Gerber S.A."/>
            <person name="Rudner A.D."/>
            <person name="Beausoleil S.A."/>
            <person name="Haas W."/>
            <person name="Villen J."/>
            <person name="Elias J.E."/>
            <person name="Gygi S.P."/>
        </authorList>
    </citation>
    <scope>PHOSPHORYLATION [LARGE SCALE ANALYSIS] AT THR-237</scope>
    <scope>IDENTIFICATION BY MASS SPECTROMETRY [LARGE SCALE ANALYSIS]</scope>
    <source>
        <strain>ADR376</strain>
    </source>
</reference>
<reference key="13">
    <citation type="journal article" date="2008" name="BMC Genomics">
        <title>Systematic identification of cell cycle regulated transcription factors from microarray time series data.</title>
        <authorList>
            <person name="Cheng C."/>
            <person name="Li L.M."/>
        </authorList>
    </citation>
    <scope>FUNCTION</scope>
</reference>
<reference key="14">
    <citation type="journal article" date="2008" name="Mol. Cell. Proteomics">
        <title>A multidimensional chromatography technology for in-depth phosphoproteome analysis.</title>
        <authorList>
            <person name="Albuquerque C.P."/>
            <person name="Smolka M.B."/>
            <person name="Payne S.H."/>
            <person name="Bafna V."/>
            <person name="Eng J."/>
            <person name="Zhou H."/>
        </authorList>
    </citation>
    <scope>PHOSPHORYLATION [LARGE SCALE ANALYSIS] AT SER-104</scope>
    <scope>IDENTIFICATION BY MASS SPECTROMETRY [LARGE SCALE ANALYSIS]</scope>
</reference>
<reference key="15">
    <citation type="journal article" date="2009" name="Science">
        <title>Global analysis of Cdk1 substrate phosphorylation sites provides insights into evolution.</title>
        <authorList>
            <person name="Holt L.J."/>
            <person name="Tuch B.B."/>
            <person name="Villen J."/>
            <person name="Johnson A.D."/>
            <person name="Gygi S.P."/>
            <person name="Morgan D.O."/>
        </authorList>
    </citation>
    <scope>IDENTIFICATION BY MASS SPECTROMETRY [LARGE SCALE ANALYSIS]</scope>
</reference>
<reference key="16">
    <citation type="journal article" date="2011" name="Gene">
        <title>Yeast cell cycle transcription factors identification by variable selection criteria.</title>
        <authorList>
            <person name="Wang H."/>
            <person name="Wang Y.H."/>
            <person name="Wu W.S."/>
        </authorList>
    </citation>
    <scope>FUNCTION</scope>
</reference>
<reference key="17">
    <citation type="journal article" date="2012" name="Nucleic Acids Res.">
        <title>Tye7 regulates yeast Ty1 retrotransposon sense and antisense transcription in response to adenylic nucleotides stress.</title>
        <authorList>
            <person name="Servant G."/>
            <person name="Pinson B."/>
            <person name="Tchalikian-Cosson A."/>
            <person name="Coulpier F."/>
            <person name="Lemoine S."/>
            <person name="Pennetier C."/>
            <person name="Bridier-Nahmias A."/>
            <person name="Todeschini A.L."/>
            <person name="Fayol H."/>
            <person name="Daignan-Fornier B."/>
            <person name="Lesage P."/>
        </authorList>
    </citation>
    <scope>FUNCTION</scope>
    <scope>INDUCTION</scope>
    <scope>DNA-BINDING</scope>
</reference>
<reference evidence="17" key="18">
    <citation type="journal article" date="2021" name="Acta Crystallogr. F Struct. Biol. Commun.">
        <title>Crystal structure of the complex of DNA with the C-terminal domain of TYE7 from Saccharomyces cerevisiae.</title>
        <authorList>
            <person name="Gui W."/>
            <person name="Xue L."/>
            <person name="Yue J."/>
            <person name="Kuang Z."/>
            <person name="Jin Y."/>
            <person name="Niu L."/>
        </authorList>
    </citation>
    <scope>X-RAY CRYSTALLOGRAPHY (2.55 ANGSTROMS) OF 165-291 IN COMPLEX WITH DNA</scope>
    <scope>SUBUNIT</scope>
    <scope>MUTAGENESIS OF HIS-185; GLU-189; LYS-190; ARG-191; ARG-193; ASN-197 AND LYS-251</scope>
</reference>
<feature type="chain" id="PRO_0000127495" description="Transcription factor TYE7">
    <location>
        <begin position="1"/>
        <end position="291"/>
    </location>
</feature>
<feature type="domain" description="bHLH" evidence="1">
    <location>
        <begin position="180"/>
        <end position="265"/>
    </location>
</feature>
<feature type="region of interest" description="Disordered" evidence="2">
    <location>
        <begin position="89"/>
        <end position="109"/>
    </location>
</feature>
<feature type="region of interest" description="Disordered" evidence="2">
    <location>
        <begin position="221"/>
        <end position="245"/>
    </location>
</feature>
<feature type="compositionally biased region" description="Low complexity" evidence="2">
    <location>
        <begin position="96"/>
        <end position="109"/>
    </location>
</feature>
<feature type="compositionally biased region" description="Low complexity" evidence="2">
    <location>
        <begin position="233"/>
        <end position="245"/>
    </location>
</feature>
<feature type="binding site" evidence="11 17">
    <location>
        <position position="185"/>
    </location>
    <ligand>
        <name>DNA</name>
        <dbReference type="ChEBI" id="CHEBI:16991"/>
    </ligand>
</feature>
<feature type="binding site" evidence="11 17">
    <location>
        <position position="189"/>
    </location>
    <ligand>
        <name>DNA</name>
        <dbReference type="ChEBI" id="CHEBI:16991"/>
    </ligand>
</feature>
<feature type="binding site" evidence="11 17">
    <location>
        <position position="193"/>
    </location>
    <ligand>
        <name>DNA</name>
        <dbReference type="ChEBI" id="CHEBI:16991"/>
    </ligand>
</feature>
<feature type="modified residue" description="Phosphoserine" evidence="19">
    <location>
        <position position="104"/>
    </location>
</feature>
<feature type="modified residue" description="Phosphothreonine" evidence="18">
    <location>
        <position position="237"/>
    </location>
</feature>
<feature type="mutagenesis site" description="Leads to unstable binding between TYE7 and DNA." evidence="11">
    <original>H</original>
    <variation>A</variation>
    <location>
        <position position="185"/>
    </location>
</feature>
<feature type="mutagenesis site" description="Weakens the DNA-binding affinity." evidence="11">
    <original>E</original>
    <variation>A</variation>
    <location>
        <position position="189"/>
    </location>
</feature>
<feature type="mutagenesis site" description="In SGC1-1; suppresses transcriptional defect caused by a GCR1 null mutation." evidence="12">
    <original>E</original>
    <variation>Q</variation>
    <location>
        <position position="189"/>
    </location>
</feature>
<feature type="mutagenesis site" description="Impairs the DNA-binding." evidence="11">
    <original>K</original>
    <variation>A</variation>
    <location>
        <position position="190"/>
    </location>
</feature>
<feature type="mutagenesis site" description="Does not affect the DNA-binding affinity." evidence="11">
    <original>R</original>
    <variation>A</variation>
    <location>
        <position position="191"/>
    </location>
</feature>
<feature type="mutagenesis site" description="Leads to unstable binding between TYE7 and DNA." evidence="11">
    <original>R</original>
    <variation>A</variation>
    <location>
        <position position="193"/>
    </location>
</feature>
<feature type="mutagenesis site" description="Weakens the DNA-binding affinity." evidence="11">
    <original>N</original>
    <variation>A</variation>
    <location>
        <position position="197"/>
    </location>
</feature>
<feature type="mutagenesis site" description="In SGC1-2/3/4; suppresses transcriptional defect caused by a GCR1 null mutation." evidence="12">
    <original>V</original>
    <variation>I</variation>
    <location>
        <position position="210"/>
    </location>
</feature>
<feature type="mutagenesis site" description="Weakens the DNA-binding affinity." evidence="11">
    <original>K</original>
    <variation>A</variation>
    <location>
        <position position="251"/>
    </location>
</feature>
<feature type="helix" evidence="20">
    <location>
        <begin position="179"/>
        <end position="205"/>
    </location>
</feature>
<feature type="turn" evidence="20">
    <location>
        <begin position="208"/>
        <end position="212"/>
    </location>
</feature>
<feature type="strand" evidence="20">
    <location>
        <begin position="215"/>
        <end position="217"/>
    </location>
</feature>
<feature type="helix" evidence="20">
    <location>
        <begin position="251"/>
        <end position="287"/>
    </location>
</feature>
<gene>
    <name evidence="15" type="primary">TYE7</name>
    <name evidence="14" type="synonym">SGC1</name>
    <name type="ordered locus">YOR344C</name>
    <name type="ORF">O6233</name>
</gene>
<protein>
    <recommendedName>
        <fullName evidence="15">Transcription factor TYE7</fullName>
    </recommendedName>
    <alternativeName>
        <fullName evidence="14">Basic-helix-loop-helix protein SGC1</fullName>
    </alternativeName>
    <alternativeName>
        <fullName evidence="15">Ty1-mediated expression protein 7</fullName>
    </alternativeName>
</protein>
<comment type="function">
    <text evidence="3 5 6 7 8 9 10 12 13">Transcriptional activator of glycolytic gene expression, such as enolase genes (ENO1 and ENO2), glyceraldehyde-3-phosphate dehydrogenase gene (TDH), phosphoglycerate kinase (PGK1), phosphoglycerate mutase (PGM1), pyruvate kinase (PYK1) and triosephosphate isomerase (TPI1) genes (PubMed:10606743, PubMed:7739544). Binds DNA on E-box motifs: 5'-CANNTG-3' (PubMed:10606743). In response to adenylic nucleotide reduction, activates Ty1 mRNA transcription, possibly by controlling Ty1 antisense transcription (PubMed:22379133, PubMed:7900422). Acts as a cell cycle transcription factor (PubMed:16157877, PubMed:16381908, PubMed:18315882, PubMed:21703335). Its function may also be linked to sulfur metabolism and the cross-regulation between phosphate and sulfate metabolism (PubMed:17241460).</text>
</comment>
<comment type="subunit">
    <text evidence="3 11">Homodimer (PubMed:34605438). Efficient DNA binding requires dimerization with another bHLH protein (PubMed:10606743).</text>
</comment>
<comment type="subcellular location">
    <subcellularLocation>
        <location evidence="16">Nucleus</location>
    </subcellularLocation>
</comment>
<comment type="induction">
    <text evidence="10">Expression is induced in response to adenylic nucleotide reduction.</text>
</comment>
<comment type="miscellaneous">
    <text evidence="4">Present with 486 molecules/cell in log phase SD medium.</text>
</comment>
<proteinExistence type="evidence at protein level"/>